<sequence length="433" mass="46623">MARCTNLVTVFLLWALLMFSWCKASRISPNVYDHSYKRFKSDSLIKRREDITGLRSFVRASLRTPTTVSVSDFGAKGDGKTDDTQAFVNAWKKACSSNGAVNLLVPKGNTYLLKSIQLTGPCNSILTVQIFGTLSASQKRSDYKDISKWIMFDGVNNLSVDGGDTGVVDGNGETWWQNSCKRNKAKPCTKAPTALTFYNSKSLIVKNLKVRNAQQIQISIEKCSNVQVSNVVVTAPADSPNTDGIHITNTQNIRVSESIIGTGDDCISIESGSQNVQINDITCGPGHGISIGSLGDDNSKAFVSGVTVDGAKLSGTDNGVRIKTYQGGSGTASNIIFQNIQMDNVKNPIIIDQDYCDKSKCTTEKSAVQVKNVVYRDISGTSASENAITFNCSKNYPCQGIVLDRVNIKGGKATCTNANVVDKGAVLPQCNST</sequence>
<organism>
    <name type="scientific">Arabidopsis thaliana</name>
    <name type="common">Mouse-ear cress</name>
    <dbReference type="NCBI Taxonomy" id="3702"/>
    <lineage>
        <taxon>Eukaryota</taxon>
        <taxon>Viridiplantae</taxon>
        <taxon>Streptophyta</taxon>
        <taxon>Embryophyta</taxon>
        <taxon>Tracheophyta</taxon>
        <taxon>Spermatophyta</taxon>
        <taxon>Magnoliopsida</taxon>
        <taxon>eudicotyledons</taxon>
        <taxon>Gunneridae</taxon>
        <taxon>Pentapetalae</taxon>
        <taxon>rosids</taxon>
        <taxon>malvids</taxon>
        <taxon>Brassicales</taxon>
        <taxon>Brassicaceae</taxon>
        <taxon>Camelineae</taxon>
        <taxon>Arabidopsis</taxon>
    </lineage>
</organism>
<keyword id="KW-0002">3D-structure</keyword>
<keyword id="KW-0134">Cell wall</keyword>
<keyword id="KW-0961">Cell wall biogenesis/degradation</keyword>
<keyword id="KW-0326">Glycosidase</keyword>
<keyword id="KW-0378">Hydrolase</keyword>
<keyword id="KW-1185">Reference proteome</keyword>
<keyword id="KW-0677">Repeat</keyword>
<keyword id="KW-0964">Secreted</keyword>
<keyword id="KW-0732">Signal</keyword>
<reference key="1">
    <citation type="journal article" date="1999" name="Nature">
        <title>Sequence and analysis of chromosome 2 of the plant Arabidopsis thaliana.</title>
        <authorList>
            <person name="Lin X."/>
            <person name="Kaul S."/>
            <person name="Rounsley S.D."/>
            <person name="Shea T.P."/>
            <person name="Benito M.-I."/>
            <person name="Town C.D."/>
            <person name="Fujii C.Y."/>
            <person name="Mason T.M."/>
            <person name="Bowman C.L."/>
            <person name="Barnstead M.E."/>
            <person name="Feldblyum T.V."/>
            <person name="Buell C.R."/>
            <person name="Ketchum K.A."/>
            <person name="Lee J.J."/>
            <person name="Ronning C.M."/>
            <person name="Koo H.L."/>
            <person name="Moffat K.S."/>
            <person name="Cronin L.A."/>
            <person name="Shen M."/>
            <person name="Pai G."/>
            <person name="Van Aken S."/>
            <person name="Umayam L."/>
            <person name="Tallon L.J."/>
            <person name="Gill J.E."/>
            <person name="Adams M.D."/>
            <person name="Carrera A.J."/>
            <person name="Creasy T.H."/>
            <person name="Goodman H.M."/>
            <person name="Somerville C.R."/>
            <person name="Copenhaver G.P."/>
            <person name="Preuss D."/>
            <person name="Nierman W.C."/>
            <person name="White O."/>
            <person name="Eisen J.A."/>
            <person name="Salzberg S.L."/>
            <person name="Fraser C.M."/>
            <person name="Venter J.C."/>
        </authorList>
    </citation>
    <scope>NUCLEOTIDE SEQUENCE [LARGE SCALE GENOMIC DNA]</scope>
    <source>
        <strain>cv. Columbia</strain>
    </source>
</reference>
<reference key="2">
    <citation type="journal article" date="2017" name="Plant J.">
        <title>Araport11: a complete reannotation of the Arabidopsis thaliana reference genome.</title>
        <authorList>
            <person name="Cheng C.Y."/>
            <person name="Krishnakumar V."/>
            <person name="Chan A.P."/>
            <person name="Thibaud-Nissen F."/>
            <person name="Schobel S."/>
            <person name="Town C.D."/>
        </authorList>
    </citation>
    <scope>GENOME REANNOTATION</scope>
    <source>
        <strain>cv. Columbia</strain>
    </source>
</reference>
<reference key="3">
    <citation type="journal article" date="2003" name="Science">
        <title>Empirical analysis of transcriptional activity in the Arabidopsis genome.</title>
        <authorList>
            <person name="Yamada K."/>
            <person name="Lim J."/>
            <person name="Dale J.M."/>
            <person name="Chen H."/>
            <person name="Shinn P."/>
            <person name="Palm C.J."/>
            <person name="Southwick A.M."/>
            <person name="Wu H.C."/>
            <person name="Kim C.J."/>
            <person name="Nguyen M."/>
            <person name="Pham P.K."/>
            <person name="Cheuk R.F."/>
            <person name="Karlin-Newmann G."/>
            <person name="Liu S.X."/>
            <person name="Lam B."/>
            <person name="Sakano H."/>
            <person name="Wu T."/>
            <person name="Yu G."/>
            <person name="Miranda M."/>
            <person name="Quach H.L."/>
            <person name="Tripp M."/>
            <person name="Chang C.H."/>
            <person name="Lee J.M."/>
            <person name="Toriumi M.J."/>
            <person name="Chan M.M."/>
            <person name="Tang C.C."/>
            <person name="Onodera C.S."/>
            <person name="Deng J.M."/>
            <person name="Akiyama K."/>
            <person name="Ansari Y."/>
            <person name="Arakawa T."/>
            <person name="Banh J."/>
            <person name="Banno F."/>
            <person name="Bowser L."/>
            <person name="Brooks S.Y."/>
            <person name="Carninci P."/>
            <person name="Chao Q."/>
            <person name="Choy N."/>
            <person name="Enju A."/>
            <person name="Goldsmith A.D."/>
            <person name="Gurjal M."/>
            <person name="Hansen N.F."/>
            <person name="Hayashizaki Y."/>
            <person name="Johnson-Hopson C."/>
            <person name="Hsuan V.W."/>
            <person name="Iida K."/>
            <person name="Karnes M."/>
            <person name="Khan S."/>
            <person name="Koesema E."/>
            <person name="Ishida J."/>
            <person name="Jiang P.X."/>
            <person name="Jones T."/>
            <person name="Kawai J."/>
            <person name="Kamiya A."/>
            <person name="Meyers C."/>
            <person name="Nakajima M."/>
            <person name="Narusaka M."/>
            <person name="Seki M."/>
            <person name="Sakurai T."/>
            <person name="Satou M."/>
            <person name="Tamse R."/>
            <person name="Vaysberg M."/>
            <person name="Wallender E.K."/>
            <person name="Wong C."/>
            <person name="Yamamura Y."/>
            <person name="Yuan S."/>
            <person name="Shinozaki K."/>
            <person name="Davis R.W."/>
            <person name="Theologis A."/>
            <person name="Ecker J.R."/>
        </authorList>
    </citation>
    <scope>NUCLEOTIDE SEQUENCE [LARGE SCALE MRNA]</scope>
    <source>
        <strain>cv. Columbia</strain>
    </source>
</reference>
<reference key="4">
    <citation type="submission" date="1998-08" db="EMBL/GenBank/DDBJ databases">
        <title>Signal peptide selection derived cDNAs from Arabidopsis thaliana leaves and guard cells.</title>
        <authorList>
            <person name="Stracke R."/>
            <person name="Palme K."/>
        </authorList>
    </citation>
    <scope>NUCLEOTIDE SEQUENCE [LARGE SCALE MRNA] OF 1-185</scope>
</reference>
<reference key="5">
    <citation type="journal article" date="2002" name="Plant Physiol.">
        <title>Temporal and spatial expression of a polygalacturonase during leaf and flower abscission in oilseed rape and Arabidopsis.</title>
        <authorList>
            <person name="Gonzalez-Carranza Z.H."/>
            <person name="Whitelaw C.A."/>
            <person name="Swarup R."/>
            <person name="Roberts J.A."/>
        </authorList>
    </citation>
    <scope>TISSUE SPECIFICITY</scope>
    <scope>INDUCTION</scope>
</reference>
<reference key="6">
    <citation type="journal article" date="2006" name="Genome Biol.">
        <title>Patterns of expansion and expression divergence in the plant polygalacturonase gene family.</title>
        <authorList>
            <person name="Kim J."/>
            <person name="Shiu S.-H."/>
            <person name="Thoma S."/>
            <person name="Li W.-H."/>
            <person name="Patterson S.E."/>
        </authorList>
    </citation>
    <scope>TISSUE SPECIFICITY</scope>
</reference>
<reference key="7">
    <citation type="journal article" date="2007" name="J. Exp. Bot.">
        <title>Expression of polygalacturonases and evidence to support their role during cell separation processes in Arabidopsis thaliana.</title>
        <authorList>
            <person name="Gonzalez-Carranza Z.H."/>
            <person name="Elliott K.A."/>
            <person name="Roberts J.A."/>
        </authorList>
    </citation>
    <scope>FUNCTION</scope>
    <scope>DISRUPTION PHENOTYPE</scope>
    <scope>TISSUE SPECIFICITY</scope>
    <scope>INDUCTION</scope>
</reference>
<reference key="8">
    <citation type="journal article" date="2009" name="Plant Cell">
        <title>ARABIDOPSIS DEHISCENCE ZONE POLYGALACTURONASE1 (ADPG1), ADPG2, and QUARTET2 are polygalacturonases required for cell separation during reproductive development in Arabidopsis.</title>
        <authorList>
            <person name="Ogawa M."/>
            <person name="Kay P."/>
            <person name="Wilson S."/>
            <person name="Swain S.M."/>
        </authorList>
    </citation>
    <scope>FUNCTION</scope>
    <scope>TISSUE SPECIFICITY</scope>
    <scope>DISRUPTION PHENOTYPE</scope>
</reference>
<feature type="signal peptide" evidence="2">
    <location>
        <begin position="1"/>
        <end position="24"/>
    </location>
</feature>
<feature type="chain" id="PRO_0000367914" description="Polygalacturonase ADPG2">
    <location>
        <begin position="25"/>
        <end position="433"/>
    </location>
</feature>
<feature type="repeat" description="PbH1 1">
    <location>
        <begin position="223"/>
        <end position="249"/>
    </location>
</feature>
<feature type="repeat" description="PbH1 2">
    <location>
        <begin position="250"/>
        <end position="271"/>
    </location>
</feature>
<feature type="repeat" description="PbH1 3">
    <location>
        <begin position="273"/>
        <end position="293"/>
    </location>
</feature>
<feature type="repeat" description="PbH1 4">
    <location>
        <begin position="303"/>
        <end position="324"/>
    </location>
</feature>
<feature type="repeat" description="PbH1 5">
    <location>
        <begin position="332"/>
        <end position="353"/>
    </location>
</feature>
<feature type="active site" description="Proton donor" evidence="3">
    <location>
        <position position="264"/>
    </location>
</feature>
<feature type="active site" evidence="3">
    <location>
        <position position="287"/>
    </location>
</feature>
<feature type="sequence conflict" description="In Ref. 4; AAN60351." evidence="8" ref="4">
    <original>T</original>
    <variation>S</variation>
    <location>
        <position position="5"/>
    </location>
</feature>
<feature type="sequence conflict" description="In Ref. 3; AAL84942." evidence="8" ref="3">
    <original>F</original>
    <variation>L</variation>
    <location>
        <position position="19"/>
    </location>
</feature>
<feature type="sequence conflict" description="In Ref. 4; AAN60351." evidence="8" ref="4">
    <original>D</original>
    <variation>G</variation>
    <location>
        <position position="33"/>
    </location>
</feature>
<feature type="sequence conflict" description="In Ref. 4; AAN60351." evidence="8" ref="4">
    <original>N</original>
    <variation>S</variation>
    <location>
        <position position="157"/>
    </location>
</feature>
<feature type="sequence conflict" description="In Ref. 4; AAN60351." evidence="8" ref="4">
    <original>Q</original>
    <variation>P</variation>
    <location>
        <position position="177"/>
    </location>
</feature>
<feature type="sequence conflict" description="In Ref. 4; AAN60351." evidence="8" ref="4">
    <original>K</original>
    <variation>Q</variation>
    <location>
        <position position="181"/>
    </location>
</feature>
<feature type="sequence conflict" description="In Ref. 3; AAL84942." evidence="8" ref="3">
    <original>Y</original>
    <variation>D</variation>
    <location>
        <position position="355"/>
    </location>
</feature>
<feature type="sequence conflict" description="In Ref. 3; AAL84942." evidence="8" ref="3">
    <original>S</original>
    <variation>G</variation>
    <location>
        <position position="359"/>
    </location>
</feature>
<feature type="strand" evidence="9">
    <location>
        <begin position="66"/>
        <end position="69"/>
    </location>
</feature>
<feature type="helix" evidence="9">
    <location>
        <begin position="70"/>
        <end position="73"/>
    </location>
</feature>
<feature type="strand" evidence="9">
    <location>
        <begin position="78"/>
        <end position="82"/>
    </location>
</feature>
<feature type="helix" evidence="9">
    <location>
        <begin position="84"/>
        <end position="96"/>
    </location>
</feature>
<feature type="strand" evidence="9">
    <location>
        <begin position="99"/>
        <end position="105"/>
    </location>
</feature>
<feature type="strand" evidence="9">
    <location>
        <begin position="110"/>
        <end position="113"/>
    </location>
</feature>
<feature type="strand" evidence="9">
    <location>
        <begin position="116"/>
        <end position="119"/>
    </location>
</feature>
<feature type="strand" evidence="9">
    <location>
        <begin position="123"/>
        <end position="130"/>
    </location>
</feature>
<feature type="strand" evidence="9">
    <location>
        <begin position="132"/>
        <end position="136"/>
    </location>
</feature>
<feature type="helix" evidence="9">
    <location>
        <begin position="140"/>
        <end position="142"/>
    </location>
</feature>
<feature type="strand" evidence="9">
    <location>
        <begin position="148"/>
        <end position="154"/>
    </location>
</feature>
<feature type="strand" evidence="9">
    <location>
        <begin position="159"/>
        <end position="161"/>
    </location>
</feature>
<feature type="turn" evidence="9">
    <location>
        <begin position="163"/>
        <end position="165"/>
    </location>
</feature>
<feature type="strand" evidence="9">
    <location>
        <begin position="167"/>
        <end position="169"/>
    </location>
</feature>
<feature type="helix" evidence="9">
    <location>
        <begin position="173"/>
        <end position="177"/>
    </location>
</feature>
<feature type="turn" evidence="9">
    <location>
        <begin position="180"/>
        <end position="182"/>
    </location>
</feature>
<feature type="strand" evidence="9">
    <location>
        <begin position="193"/>
        <end position="199"/>
    </location>
</feature>
<feature type="strand" evidence="9">
    <location>
        <begin position="201"/>
        <end position="207"/>
    </location>
</feature>
<feature type="strand" evidence="9">
    <location>
        <begin position="209"/>
        <end position="212"/>
    </location>
</feature>
<feature type="strand" evidence="9">
    <location>
        <begin position="217"/>
        <end position="222"/>
    </location>
</feature>
<feature type="strand" evidence="9">
    <location>
        <begin position="224"/>
        <end position="230"/>
    </location>
</feature>
<feature type="strand" evidence="9">
    <location>
        <begin position="232"/>
        <end position="234"/>
    </location>
</feature>
<feature type="strand" evidence="9">
    <location>
        <begin position="244"/>
        <end position="249"/>
    </location>
</feature>
<feature type="strand" evidence="9">
    <location>
        <begin position="251"/>
        <end position="261"/>
    </location>
</feature>
<feature type="strand" evidence="9">
    <location>
        <begin position="266"/>
        <end position="269"/>
    </location>
</feature>
<feature type="strand" evidence="9">
    <location>
        <begin position="274"/>
        <end position="283"/>
    </location>
</feature>
<feature type="strand" evidence="9">
    <location>
        <begin position="285"/>
        <end position="287"/>
    </location>
</feature>
<feature type="strand" evidence="9">
    <location>
        <begin position="289"/>
        <end position="295"/>
    </location>
</feature>
<feature type="helix" evidence="9">
    <location>
        <begin position="296"/>
        <end position="298"/>
    </location>
</feature>
<feature type="strand" evidence="9">
    <location>
        <begin position="300"/>
        <end position="315"/>
    </location>
</feature>
<feature type="strand" evidence="9">
    <location>
        <begin position="319"/>
        <end position="325"/>
    </location>
</feature>
<feature type="strand" evidence="9">
    <location>
        <begin position="329"/>
        <end position="355"/>
    </location>
</feature>
<feature type="strand" evidence="9">
    <location>
        <begin position="357"/>
        <end position="360"/>
    </location>
</feature>
<feature type="strand" evidence="9">
    <location>
        <begin position="369"/>
        <end position="391"/>
    </location>
</feature>
<feature type="strand" evidence="9">
    <location>
        <begin position="394"/>
        <end position="396"/>
    </location>
</feature>
<feature type="strand" evidence="9">
    <location>
        <begin position="398"/>
        <end position="410"/>
    </location>
</feature>
<feature type="strand" evidence="9">
    <location>
        <begin position="412"/>
        <end position="428"/>
    </location>
</feature>
<evidence type="ECO:0000250" key="1"/>
<evidence type="ECO:0000255" key="2"/>
<evidence type="ECO:0000255" key="3">
    <source>
        <dbReference type="PROSITE-ProRule" id="PRU10052"/>
    </source>
</evidence>
<evidence type="ECO:0000269" key="4">
    <source>
    </source>
</evidence>
<evidence type="ECO:0000269" key="5">
    <source>
    </source>
</evidence>
<evidence type="ECO:0000269" key="6">
    <source>
    </source>
</evidence>
<evidence type="ECO:0000269" key="7">
    <source>
    </source>
</evidence>
<evidence type="ECO:0000305" key="8"/>
<evidence type="ECO:0007829" key="9">
    <source>
        <dbReference type="PDB" id="7B8B"/>
    </source>
</evidence>
<name>ADPG2_ARATH</name>
<dbReference type="EC" id="3.2.1.15"/>
<dbReference type="EMBL" id="AC002339">
    <property type="protein sequence ID" value="AAC02763.1"/>
    <property type="status" value="ALT_SEQ"/>
    <property type="molecule type" value="Genomic_DNA"/>
</dbReference>
<dbReference type="EMBL" id="CP002685">
    <property type="protein sequence ID" value="AEC10040.1"/>
    <property type="molecule type" value="Genomic_DNA"/>
</dbReference>
<dbReference type="EMBL" id="AY078936">
    <property type="protein sequence ID" value="AAL84942.1"/>
    <property type="molecule type" value="mRNA"/>
</dbReference>
<dbReference type="EMBL" id="AF083793">
    <property type="protein sequence ID" value="AAN60351.1"/>
    <property type="molecule type" value="mRNA"/>
</dbReference>
<dbReference type="PIR" id="H84846">
    <property type="entry name" value="H84846"/>
</dbReference>
<dbReference type="RefSeq" id="NP_850359.1">
    <property type="nucleotide sequence ID" value="NM_180028.3"/>
</dbReference>
<dbReference type="PDB" id="7B8B">
    <property type="method" value="X-ray"/>
    <property type="resolution" value="2.03 A"/>
    <property type="chains" value="A/B=25-433"/>
</dbReference>
<dbReference type="PDBsum" id="7B8B"/>
<dbReference type="SMR" id="Q8RY29"/>
<dbReference type="FunCoup" id="Q8RY29">
    <property type="interactions" value="141"/>
</dbReference>
<dbReference type="STRING" id="3702.Q8RY29"/>
<dbReference type="CAZy" id="GH28">
    <property type="family name" value="Glycoside Hydrolase Family 28"/>
</dbReference>
<dbReference type="PaxDb" id="3702-AT2G41850.1"/>
<dbReference type="ProteomicsDB" id="244832"/>
<dbReference type="EnsemblPlants" id="AT2G41850.1">
    <property type="protein sequence ID" value="AT2G41850.1"/>
    <property type="gene ID" value="AT2G41850"/>
</dbReference>
<dbReference type="GeneID" id="818785"/>
<dbReference type="Gramene" id="AT2G41850.1">
    <property type="protein sequence ID" value="AT2G41850.1"/>
    <property type="gene ID" value="AT2G41850"/>
</dbReference>
<dbReference type="KEGG" id="ath:AT2G41850"/>
<dbReference type="Araport" id="AT2G41850"/>
<dbReference type="TAIR" id="AT2G41850">
    <property type="gene designation" value="PGAZAT"/>
</dbReference>
<dbReference type="eggNOG" id="ENOG502QRJW">
    <property type="taxonomic scope" value="Eukaryota"/>
</dbReference>
<dbReference type="HOGENOM" id="CLU_016031_2_3_1"/>
<dbReference type="InParanoid" id="Q8RY29"/>
<dbReference type="OMA" id="INQCYST"/>
<dbReference type="PhylomeDB" id="Q8RY29"/>
<dbReference type="BioCyc" id="ARA:AT2G41850-MONOMER"/>
<dbReference type="CD-CODE" id="4299E36E">
    <property type="entry name" value="Nucleolus"/>
</dbReference>
<dbReference type="PRO" id="PR:Q8RY29"/>
<dbReference type="Proteomes" id="UP000006548">
    <property type="component" value="Chromosome 2"/>
</dbReference>
<dbReference type="ExpressionAtlas" id="Q8RY29">
    <property type="expression patterns" value="baseline and differential"/>
</dbReference>
<dbReference type="GO" id="GO:0005576">
    <property type="term" value="C:extracellular region"/>
    <property type="evidence" value="ECO:0007669"/>
    <property type="project" value="UniProtKB-KW"/>
</dbReference>
<dbReference type="GO" id="GO:0004650">
    <property type="term" value="F:polygalacturonase activity"/>
    <property type="evidence" value="ECO:0000314"/>
    <property type="project" value="TAIR"/>
</dbReference>
<dbReference type="GO" id="GO:0009901">
    <property type="term" value="P:anther dehiscence"/>
    <property type="evidence" value="ECO:0000315"/>
    <property type="project" value="TAIR"/>
</dbReference>
<dbReference type="GO" id="GO:0005975">
    <property type="term" value="P:carbohydrate metabolic process"/>
    <property type="evidence" value="ECO:0007669"/>
    <property type="project" value="InterPro"/>
</dbReference>
<dbReference type="GO" id="GO:0009830">
    <property type="term" value="P:cell wall modification involved in abscission"/>
    <property type="evidence" value="ECO:0000304"/>
    <property type="project" value="TAIR"/>
</dbReference>
<dbReference type="GO" id="GO:0010227">
    <property type="term" value="P:floral organ abscission"/>
    <property type="evidence" value="ECO:0000315"/>
    <property type="project" value="TAIR"/>
</dbReference>
<dbReference type="GO" id="GO:0010047">
    <property type="term" value="P:fruit dehiscence"/>
    <property type="evidence" value="ECO:0000315"/>
    <property type="project" value="TAIR"/>
</dbReference>
<dbReference type="FunFam" id="2.160.20.10:FF:000028">
    <property type="entry name" value="Polygalacturonase QRT2"/>
    <property type="match status" value="1"/>
</dbReference>
<dbReference type="Gene3D" id="2.160.20.10">
    <property type="entry name" value="Single-stranded right-handed beta-helix, Pectin lyase-like"/>
    <property type="match status" value="1"/>
</dbReference>
<dbReference type="InterPro" id="IPR000743">
    <property type="entry name" value="Glyco_hydro_28"/>
</dbReference>
<dbReference type="InterPro" id="IPR006626">
    <property type="entry name" value="PbH1"/>
</dbReference>
<dbReference type="InterPro" id="IPR012334">
    <property type="entry name" value="Pectin_lyas_fold"/>
</dbReference>
<dbReference type="InterPro" id="IPR011050">
    <property type="entry name" value="Pectin_lyase_fold/virulence"/>
</dbReference>
<dbReference type="PANTHER" id="PTHR31375">
    <property type="match status" value="1"/>
</dbReference>
<dbReference type="Pfam" id="PF00295">
    <property type="entry name" value="Glyco_hydro_28"/>
    <property type="match status" value="1"/>
</dbReference>
<dbReference type="SMART" id="SM00710">
    <property type="entry name" value="PbH1"/>
    <property type="match status" value="5"/>
</dbReference>
<dbReference type="SUPFAM" id="SSF51126">
    <property type="entry name" value="Pectin lyase-like"/>
    <property type="match status" value="1"/>
</dbReference>
<dbReference type="PROSITE" id="PS00502">
    <property type="entry name" value="POLYGALACTURONASE"/>
    <property type="match status" value="1"/>
</dbReference>
<proteinExistence type="evidence at protein level"/>
<protein>
    <recommendedName>
        <fullName>Polygalacturonase ADPG2</fullName>
        <shortName>AtADPG2</shortName>
        <shortName>PG ADPG2</shortName>
        <ecNumber>3.2.1.15</ecNumber>
    </recommendedName>
    <alternativeName>
        <fullName>Pectinase ADPG2</fullName>
    </alternativeName>
    <alternativeName>
        <fullName>Protein ARABIDOPSIS DEHISCENCE ZONE POLYGALACTURONASE 2</fullName>
    </alternativeName>
</protein>
<comment type="function">
    <text evidence="6 7">Polygalacturonase involved in cell separation in the final stages of pod shatter, in anther dehiscence and in floral organ abscission.</text>
</comment>
<comment type="catalytic activity">
    <reaction>
        <text>(1,4-alpha-D-galacturonosyl)n+m + H2O = (1,4-alpha-D-galacturonosyl)n + (1,4-alpha-D-galacturonosyl)m.</text>
        <dbReference type="EC" id="3.2.1.15"/>
    </reaction>
</comment>
<comment type="subcellular location">
    <subcellularLocation>
        <location evidence="1">Secreted</location>
        <location evidence="1">Cell wall</location>
    </subcellularLocation>
</comment>
<comment type="tissue specificity">
    <text evidence="4 5 6 7">Expressed in roots and in the abscission zone of the sepals, petals and stamens of flowers, at the base of cauline leaves and in the basal cell of trichomes from senescing leaves. Found at the site of lateral root emergence, in the dehiscence zone of anthers and maturing siliques. Also expressed early in anther development, at the time of microspore separation. Expressed in germinating seeds, at the point at which the radicle broke through the seed coat. Not expressed at the junction between the seed and the funiculus or in the dehiscence zone of anthers or pods.</text>
</comment>
<comment type="induction">
    <text evidence="4 6">Up-regulated by ethylene.</text>
</comment>
<comment type="disruption phenotype">
    <text evidence="6 7">No visible phenotype under normal growth conditions. Small delay in floral organ shedding.</text>
</comment>
<comment type="similarity">
    <text evidence="8">Belongs to the glycosyl hydrolase 28 family.</text>
</comment>
<comment type="sequence caution" evidence="8">
    <conflict type="erroneous gene model prediction">
        <sequence resource="EMBL-CDS" id="AAC02763"/>
    </conflict>
</comment>
<gene>
    <name type="primary">ADPG2</name>
    <name type="synonym">PGAZAT</name>
    <name type="ordered locus">At2g41850</name>
    <name type="ORF">T11A7.5</name>
</gene>
<accession>Q8RY29</accession>
<accession>O22935</accession>
<accession>Q8H782</accession>